<comment type="function">
    <text evidence="1">Endohydrolysis of the di-N-acetylchitobiosyl unit in high-mannose glycopeptides and glycoproteins containing the -[(Man)5(GlcNAc)2]-Asn structure. One N-acetyl-D-glucosamine residue remains attached to the protein; the rest of the oligosaccharide is released intact. Cleaves the peptidoglycan connecting the daughter cells at the end of the cell division cycle, resulting in the separation of the two newly divided cells. Acts as an autolysin in penicillin-induced lysis (By similarity).</text>
</comment>
<comment type="catalytic activity">
    <reaction>
        <text>Hydrolyzes the link between N-acetylmuramoyl residues and L-amino acid residues in certain cell-wall glycopeptides.</text>
        <dbReference type="EC" id="3.5.1.28"/>
    </reaction>
</comment>
<comment type="catalytic activity">
    <reaction>
        <text>an N(4)-(oligosaccharide-(1-&gt;3)-[oligosaccharide-(1-&gt;6)]-beta-D-Man-(1-&gt;4)-beta-D-GlcNAc-(1-&gt;4)-alpha-D-GlcNAc)-L-asparaginyl-[protein] + H2O = an oligosaccharide-(1-&gt;3)-[oligosaccharide-(1-&gt;6)]-beta-D-Man-(1-&gt;4)-D-GlcNAc + N(4)-(N-acetyl-beta-D-glucosaminyl)-L-asparaginyl-[protein]</text>
        <dbReference type="Rhea" id="RHEA:73067"/>
        <dbReference type="Rhea" id="RHEA-COMP:12603"/>
        <dbReference type="Rhea" id="RHEA-COMP:18176"/>
        <dbReference type="ChEBI" id="CHEBI:15377"/>
        <dbReference type="ChEBI" id="CHEBI:132248"/>
        <dbReference type="ChEBI" id="CHEBI:192714"/>
        <dbReference type="ChEBI" id="CHEBI:192715"/>
        <dbReference type="EC" id="3.2.1.96"/>
    </reaction>
</comment>
<comment type="subunit">
    <text evidence="1">Oligomer; forms a ring structure at the cell surface which is important for efficient partitioning of daughter cells after cell division.</text>
</comment>
<comment type="subcellular location">
    <subcellularLocation>
        <location evidence="1">Secreted</location>
    </subcellularLocation>
    <text evidence="1">Secreted, and then anchored on the cell surface at the peripheral cell wall above the completed septum (septal region), for the next cell division cycle.</text>
</comment>
<comment type="domain">
    <text evidence="1">The GW domains are responsible for directing the proteins to the septal region.</text>
</comment>
<comment type="PTM">
    <text evidence="1">Undergoes proteolytic processing to generate the two extracellular lytic enzymes, probably at the septal region on the cell surface.</text>
</comment>
<comment type="similarity">
    <text evidence="5">In the N-terminal section; belongs to the N-acetylmuramoyl-L-alanine amidase 2 family.</text>
</comment>
<comment type="similarity">
    <text evidence="5">In the C-terminal section; belongs to the glycosyl hydrolase 73 family.</text>
</comment>
<dbReference type="EC" id="3.5.1.28"/>
<dbReference type="EC" id="3.2.1.96"/>
<dbReference type="EMBL" id="AE015929">
    <property type="protein sequence ID" value="AAO04347.1"/>
    <property type="molecule type" value="Genomic_DNA"/>
</dbReference>
<dbReference type="RefSeq" id="NP_764305.1">
    <property type="nucleotide sequence ID" value="NC_004461.1"/>
</dbReference>
<dbReference type="RefSeq" id="WP_002485275.1">
    <property type="nucleotide sequence ID" value="NC_004461.1"/>
</dbReference>
<dbReference type="SMR" id="Q8CPQ1"/>
<dbReference type="CAZy" id="GH73">
    <property type="family name" value="Glycoside Hydrolase Family 73"/>
</dbReference>
<dbReference type="MoonProt" id="Q8CPQ1"/>
<dbReference type="KEGG" id="sep:SE_0750"/>
<dbReference type="PATRIC" id="fig|176280.10.peg.722"/>
<dbReference type="eggNOG" id="COG3266">
    <property type="taxonomic scope" value="Bacteria"/>
</dbReference>
<dbReference type="eggNOG" id="COG4193">
    <property type="taxonomic scope" value="Bacteria"/>
</dbReference>
<dbReference type="eggNOG" id="COG5632">
    <property type="taxonomic scope" value="Bacteria"/>
</dbReference>
<dbReference type="HOGENOM" id="CLU_005906_0_0_9"/>
<dbReference type="OrthoDB" id="9816557at2"/>
<dbReference type="Proteomes" id="UP000001411">
    <property type="component" value="Chromosome"/>
</dbReference>
<dbReference type="GO" id="GO:0005576">
    <property type="term" value="C:extracellular region"/>
    <property type="evidence" value="ECO:0007669"/>
    <property type="project" value="UniProtKB-SubCell"/>
</dbReference>
<dbReference type="GO" id="GO:0004040">
    <property type="term" value="F:amidase activity"/>
    <property type="evidence" value="ECO:0007669"/>
    <property type="project" value="InterPro"/>
</dbReference>
<dbReference type="GO" id="GO:0033925">
    <property type="term" value="F:mannosyl-glycoprotein endo-beta-N-acetylglucosaminidase activity"/>
    <property type="evidence" value="ECO:0007669"/>
    <property type="project" value="UniProtKB-EC"/>
</dbReference>
<dbReference type="GO" id="GO:0008745">
    <property type="term" value="F:N-acetylmuramoyl-L-alanine amidase activity"/>
    <property type="evidence" value="ECO:0007669"/>
    <property type="project" value="UniProtKB-EC"/>
</dbReference>
<dbReference type="GO" id="GO:0071555">
    <property type="term" value="P:cell wall organization"/>
    <property type="evidence" value="ECO:0007669"/>
    <property type="project" value="UniProtKB-KW"/>
</dbReference>
<dbReference type="GO" id="GO:0009253">
    <property type="term" value="P:peptidoglycan catabolic process"/>
    <property type="evidence" value="ECO:0007669"/>
    <property type="project" value="InterPro"/>
</dbReference>
<dbReference type="CDD" id="cd06583">
    <property type="entry name" value="PGRP"/>
    <property type="match status" value="1"/>
</dbReference>
<dbReference type="FunFam" id="2.30.30.170:FF:000002">
    <property type="entry name" value="Bifunctional autolysin"/>
    <property type="match status" value="1"/>
</dbReference>
<dbReference type="Gene3D" id="2.30.30.170">
    <property type="match status" value="7"/>
</dbReference>
<dbReference type="Gene3D" id="3.40.80.10">
    <property type="entry name" value="Peptidoglycan recognition protein-like"/>
    <property type="match status" value="1"/>
</dbReference>
<dbReference type="InterPro" id="IPR036505">
    <property type="entry name" value="Amidase/PGRP_sf"/>
</dbReference>
<dbReference type="InterPro" id="IPR002502">
    <property type="entry name" value="Amidase_domain"/>
</dbReference>
<dbReference type="InterPro" id="IPR025987">
    <property type="entry name" value="GW_dom"/>
</dbReference>
<dbReference type="InterPro" id="IPR038200">
    <property type="entry name" value="GW_dom_sf"/>
</dbReference>
<dbReference type="InterPro" id="IPR002901">
    <property type="entry name" value="MGlyc_endo_b_GlcNAc-like_dom"/>
</dbReference>
<dbReference type="Pfam" id="PF01510">
    <property type="entry name" value="Amidase_2"/>
    <property type="match status" value="1"/>
</dbReference>
<dbReference type="Pfam" id="PF01832">
    <property type="entry name" value="Glucosaminidase"/>
    <property type="match status" value="1"/>
</dbReference>
<dbReference type="Pfam" id="PF13457">
    <property type="entry name" value="GW"/>
    <property type="match status" value="6"/>
</dbReference>
<dbReference type="SMART" id="SM00644">
    <property type="entry name" value="Ami_2"/>
    <property type="match status" value="1"/>
</dbReference>
<dbReference type="SMART" id="SM00047">
    <property type="entry name" value="LYZ2"/>
    <property type="match status" value="1"/>
</dbReference>
<dbReference type="SUPFAM" id="SSF55846">
    <property type="entry name" value="N-acetylmuramoyl-L-alanine amidase-like"/>
    <property type="match status" value="1"/>
</dbReference>
<dbReference type="PROSITE" id="PS51780">
    <property type="entry name" value="GW"/>
    <property type="match status" value="7"/>
</dbReference>
<organism>
    <name type="scientific">Staphylococcus epidermidis (strain ATCC 12228 / FDA PCI 1200)</name>
    <dbReference type="NCBI Taxonomy" id="176280"/>
    <lineage>
        <taxon>Bacteria</taxon>
        <taxon>Bacillati</taxon>
        <taxon>Bacillota</taxon>
        <taxon>Bacilli</taxon>
        <taxon>Bacillales</taxon>
        <taxon>Staphylococcaceae</taxon>
        <taxon>Staphylococcus</taxon>
    </lineage>
</organism>
<reference key="1">
    <citation type="journal article" date="2003" name="Mol. Microbiol.">
        <title>Genome-based analysis of virulence genes in a non-biofilm-forming Staphylococcus epidermidis strain (ATCC 12228).</title>
        <authorList>
            <person name="Zhang Y.-Q."/>
            <person name="Ren S.-X."/>
            <person name="Li H.-L."/>
            <person name="Wang Y.-X."/>
            <person name="Fu G."/>
            <person name="Yang J."/>
            <person name="Qin Z.-Q."/>
            <person name="Miao Y.-G."/>
            <person name="Wang W.-Y."/>
            <person name="Chen R.-S."/>
            <person name="Shen Y."/>
            <person name="Chen Z."/>
            <person name="Yuan Z.-H."/>
            <person name="Zhao G.-P."/>
            <person name="Qu D."/>
            <person name="Danchin A."/>
            <person name="Wen Y.-M."/>
        </authorList>
    </citation>
    <scope>NUCLEOTIDE SEQUENCE [LARGE SCALE GENOMIC DNA]</scope>
    <source>
        <strain>ATCC 12228 / FDA PCI 1200</strain>
    </source>
</reference>
<sequence length="1335" mass="148285">MAKKFNYKLPSMVALTLFGTAFTAHQANAAEQPQNQSNHKNVLDDQTALKQAEKAKSEVTQSTTNVSGTQTYQDPTQVQPKQDTQSTTYDASLDEMSTYNEISSNQKQQSLSTDDANQNQTNSVTKNQQEETNDLTQEDKTSTDTNQLQETQSVAKENEKDLGANANNEQQDKKMTASQPSENQAIETQTASNDNESQQKSQQVTSEQNETATPKVSNTNASGYNFDYDDEDDDSSTDHLEPISLNNVNATSKQTTSYKYKEPAQRVTTNTVKKETASNQATIDTKQFTPFSATAQPRTVYSVSSQKTSSLPKYTPKVNSSINNYIRKKNMKAPRIEEDYTSYFPKYGYRNGVGRPEGIVVHDTANDNSTIDGEIAFMKRNYTNAFVHAFVDGNRIIETAPTDYLSWGAGPYGNQRFINVEIVHTHDYDSFARSMNNYADYAATQLQYYNLKPDSAENDGRGTVWTHAAISNFLGGTDHADPHQYLRSHNYSYAELYDLIYEKYLIKTKQVAPWGTTSTKPSQPSKPSGGTNNKLTVSANRGVAQIKPTNNGLYTTVYDSKGHKTDQVQKTLSVTKTATLGNNKFYLVEDYNSGKKYGWVKQGDVVYNTAKAPVKVNQTYNVKAGSTLYTVPWGTPKQVASKVSGTGNQTFKATKQQQIDKATYLYGTVNGKSGWISKYYLTTASKPSNPTKPSTNNQLTVTNNSGVAQINAKNSGLYTTVYDTKGKTTNQIQRTLSVTKAATLGDKKFYLVGDYNTGTNYGWVKQDEVIYNTAKSPVKINQTYNVKPGVKLHTVPWGTYNQVAGTVSGKGDQTFKATKQQQIDKATYLYGTVNGKSGWISKYYLTAPSKVQALSTQSTPAPKQVKPSTQTVNQIAQVKANNSGIRASVYDKTAKSGTKYANRTFLINKQRTQGNNTYVLLQDGTSNTPLGWVNINDVTTQNIGKQTQSIGKYSVKPTNNGLYSIAWGTKNQQLLAPNTLANQAFNASKAVYVGKDLYLYGTVNNRTGWIAAKDLIQNSTDAQSTPYNYTFVINNSKSYFYMDPTKANRYSLKPYYEQTFTVIKQKNINGVKWYYGQLLDGKYVWIKSTDLVKEKIKYAYTGMTLNNAINIQSRLKYKPQVQNEPLKWSNANYSQIKNAMDTKRLANDSSLKYQFLRLDQPQYLSAQALNKLLKGKGVLENQGAAFSQAARKYGLNEIYLISHALVETGNGTSQLAKGGDVSKGKFTTKTGHKYHNVFGIGAFDNNALVDGIKYAKNAGWTSVSKAIIGGAKFIGNSYVKAGQNTLYKMRWNPANPGTHQYATDINWANVNAQVLKQFYDKIGEVGKYFEIPIYK</sequence>
<evidence type="ECO:0000250" key="1"/>
<evidence type="ECO:0000255" key="2"/>
<evidence type="ECO:0000255" key="3">
    <source>
        <dbReference type="PROSITE-ProRule" id="PRU01116"/>
    </source>
</evidence>
<evidence type="ECO:0000256" key="4">
    <source>
        <dbReference type="SAM" id="MobiDB-lite"/>
    </source>
</evidence>
<evidence type="ECO:0000305" key="5"/>
<gene>
    <name type="primary">atl</name>
    <name type="ordered locus">SE_0750</name>
</gene>
<keyword id="KW-0961">Cell wall biogenesis/degradation</keyword>
<keyword id="KW-0378">Hydrolase</keyword>
<keyword id="KW-0511">Multifunctional enzyme</keyword>
<keyword id="KW-0677">Repeat</keyword>
<keyword id="KW-0964">Secreted</keyword>
<keyword id="KW-0732">Signal</keyword>
<protein>
    <recommendedName>
        <fullName>Bifunctional autolysin</fullName>
    </recommendedName>
    <domain>
        <recommendedName>
            <fullName>N-acetylmuramoyl-L-alanine amidase</fullName>
            <ecNumber>3.5.1.28</ecNumber>
        </recommendedName>
    </domain>
    <domain>
        <recommendedName>
            <fullName>Mannosyl-glycoprotein endo-beta-N-acetylglucosaminidase</fullName>
            <ecNumber>3.2.1.96</ecNumber>
        </recommendedName>
    </domain>
</protein>
<accession>Q8CPQ1</accession>
<name>ATL_STAES</name>
<proteinExistence type="inferred from homology"/>
<feature type="signal peptide" evidence="2">
    <location>
        <begin position="1"/>
        <end position="29"/>
    </location>
</feature>
<feature type="chain" id="PRO_0000045481" description="Bifunctional autolysin">
    <location>
        <begin position="30"/>
        <end position="1335"/>
    </location>
</feature>
<feature type="domain" description="GW 1" evidence="3">
    <location>
        <begin position="533"/>
        <end position="610"/>
    </location>
</feature>
<feature type="domain" description="GW 2" evidence="3">
    <location>
        <begin position="612"/>
        <end position="686"/>
    </location>
</feature>
<feature type="domain" description="GW 3" evidence="3">
    <location>
        <begin position="700"/>
        <end position="774"/>
    </location>
</feature>
<feature type="domain" description="GW 4" evidence="3">
    <location>
        <begin position="776"/>
        <end position="850"/>
    </location>
</feature>
<feature type="domain" description="GW 5" evidence="3">
    <location>
        <begin position="868"/>
        <end position="943"/>
    </location>
</feature>
<feature type="domain" description="GW 6" evidence="3">
    <location>
        <begin position="945"/>
        <end position="1020"/>
    </location>
</feature>
<feature type="domain" description="GW 7" evidence="3">
    <location>
        <begin position="1023"/>
        <end position="1096"/>
    </location>
</feature>
<feature type="region of interest" description="Disordered" evidence="4">
    <location>
        <begin position="51"/>
        <end position="88"/>
    </location>
</feature>
<feature type="region of interest" description="Disordered" evidence="4">
    <location>
        <begin position="100"/>
        <end position="262"/>
    </location>
</feature>
<feature type="region of interest" description="N-acetylmuramoyl-L-alanine amidase">
    <location>
        <begin position="303"/>
        <end position="863"/>
    </location>
</feature>
<feature type="region of interest" description="Disordered" evidence="4">
    <location>
        <begin position="514"/>
        <end position="535"/>
    </location>
</feature>
<feature type="region of interest" description="Endo-beta-N-acetylglucosaminidase">
    <location>
        <begin position="864"/>
        <end position="1335"/>
    </location>
</feature>
<feature type="compositionally biased region" description="Polar residues" evidence="4">
    <location>
        <begin position="58"/>
        <end position="88"/>
    </location>
</feature>
<feature type="compositionally biased region" description="Polar residues" evidence="4">
    <location>
        <begin position="100"/>
        <end position="127"/>
    </location>
</feature>
<feature type="compositionally biased region" description="Polar residues" evidence="4">
    <location>
        <begin position="143"/>
        <end position="155"/>
    </location>
</feature>
<feature type="compositionally biased region" description="Polar residues" evidence="4">
    <location>
        <begin position="176"/>
        <end position="223"/>
    </location>
</feature>
<feature type="compositionally biased region" description="Polar residues" evidence="4">
    <location>
        <begin position="244"/>
        <end position="258"/>
    </location>
</feature>
<feature type="compositionally biased region" description="Low complexity" evidence="4">
    <location>
        <begin position="515"/>
        <end position="531"/>
    </location>
</feature>